<name>RL15_GLUDA</name>
<dbReference type="EMBL" id="AM889285">
    <property type="protein sequence ID" value="CAP57328.1"/>
    <property type="molecule type" value="Genomic_DNA"/>
</dbReference>
<dbReference type="EMBL" id="CP001189">
    <property type="protein sequence ID" value="ACI52715.1"/>
    <property type="molecule type" value="Genomic_DNA"/>
</dbReference>
<dbReference type="RefSeq" id="WP_012227927.1">
    <property type="nucleotide sequence ID" value="NC_010125.1"/>
</dbReference>
<dbReference type="SMR" id="A9H3K5"/>
<dbReference type="STRING" id="272568.GDI3385"/>
<dbReference type="KEGG" id="gdi:GDI3385"/>
<dbReference type="KEGG" id="gdj:Gdia_2985"/>
<dbReference type="eggNOG" id="COG0200">
    <property type="taxonomic scope" value="Bacteria"/>
</dbReference>
<dbReference type="HOGENOM" id="CLU_055188_4_0_5"/>
<dbReference type="OrthoDB" id="9810293at2"/>
<dbReference type="Proteomes" id="UP000001176">
    <property type="component" value="Chromosome"/>
</dbReference>
<dbReference type="GO" id="GO:0022625">
    <property type="term" value="C:cytosolic large ribosomal subunit"/>
    <property type="evidence" value="ECO:0007669"/>
    <property type="project" value="TreeGrafter"/>
</dbReference>
<dbReference type="GO" id="GO:0019843">
    <property type="term" value="F:rRNA binding"/>
    <property type="evidence" value="ECO:0007669"/>
    <property type="project" value="UniProtKB-UniRule"/>
</dbReference>
<dbReference type="GO" id="GO:0003735">
    <property type="term" value="F:structural constituent of ribosome"/>
    <property type="evidence" value="ECO:0007669"/>
    <property type="project" value="InterPro"/>
</dbReference>
<dbReference type="GO" id="GO:0006412">
    <property type="term" value="P:translation"/>
    <property type="evidence" value="ECO:0007669"/>
    <property type="project" value="UniProtKB-UniRule"/>
</dbReference>
<dbReference type="Gene3D" id="3.100.10.10">
    <property type="match status" value="1"/>
</dbReference>
<dbReference type="HAMAP" id="MF_01341">
    <property type="entry name" value="Ribosomal_uL15"/>
    <property type="match status" value="1"/>
</dbReference>
<dbReference type="InterPro" id="IPR030878">
    <property type="entry name" value="Ribosomal_uL15"/>
</dbReference>
<dbReference type="InterPro" id="IPR021131">
    <property type="entry name" value="Ribosomal_uL15/eL18"/>
</dbReference>
<dbReference type="InterPro" id="IPR036227">
    <property type="entry name" value="Ribosomal_uL15/eL18_sf"/>
</dbReference>
<dbReference type="InterPro" id="IPR005749">
    <property type="entry name" value="Ribosomal_uL15_bac-type"/>
</dbReference>
<dbReference type="InterPro" id="IPR001196">
    <property type="entry name" value="Ribosomal_uL15_CS"/>
</dbReference>
<dbReference type="NCBIfam" id="TIGR01071">
    <property type="entry name" value="rplO_bact"/>
    <property type="match status" value="1"/>
</dbReference>
<dbReference type="PANTHER" id="PTHR12934">
    <property type="entry name" value="50S RIBOSOMAL PROTEIN L15"/>
    <property type="match status" value="1"/>
</dbReference>
<dbReference type="PANTHER" id="PTHR12934:SF11">
    <property type="entry name" value="LARGE RIBOSOMAL SUBUNIT PROTEIN UL15M"/>
    <property type="match status" value="1"/>
</dbReference>
<dbReference type="Pfam" id="PF00828">
    <property type="entry name" value="Ribosomal_L27A"/>
    <property type="match status" value="1"/>
</dbReference>
<dbReference type="SUPFAM" id="SSF52080">
    <property type="entry name" value="Ribosomal proteins L15p and L18e"/>
    <property type="match status" value="1"/>
</dbReference>
<dbReference type="PROSITE" id="PS00475">
    <property type="entry name" value="RIBOSOMAL_L15"/>
    <property type="match status" value="1"/>
</dbReference>
<evidence type="ECO:0000255" key="1">
    <source>
        <dbReference type="HAMAP-Rule" id="MF_01341"/>
    </source>
</evidence>
<evidence type="ECO:0000256" key="2">
    <source>
        <dbReference type="SAM" id="MobiDB-lite"/>
    </source>
</evidence>
<evidence type="ECO:0000305" key="3"/>
<sequence length="162" mass="16835">MNLNELRDNAGSRYRKKRLGRGIGSGKGKTSGKGVKGQKAREGVSLNGFEGGQLPLYRRLPKRGFKNIFRKEYAPVNLGALDKAIADGKIDAGTVVTEDVLRTAGLVGSGKFAGVRLLAKGELARAVTIEVSGASATAVAAVEKAGGSVRTKAARDEAQAPA</sequence>
<protein>
    <recommendedName>
        <fullName evidence="1">Large ribosomal subunit protein uL15</fullName>
    </recommendedName>
    <alternativeName>
        <fullName evidence="3">50S ribosomal protein L15</fullName>
    </alternativeName>
</protein>
<proteinExistence type="inferred from homology"/>
<gene>
    <name evidence="1" type="primary">rplO</name>
    <name type="ordered locus">GDI3385</name>
    <name type="ordered locus">Gdia_2985</name>
</gene>
<comment type="function">
    <text evidence="1">Binds to the 23S rRNA.</text>
</comment>
<comment type="subunit">
    <text evidence="1">Part of the 50S ribosomal subunit.</text>
</comment>
<comment type="similarity">
    <text evidence="1">Belongs to the universal ribosomal protein uL15 family.</text>
</comment>
<reference key="1">
    <citation type="journal article" date="2009" name="BMC Genomics">
        <title>Complete genome sequence of the sugarcane nitrogen-fixing endophyte Gluconacetobacter diazotrophicus Pal5.</title>
        <authorList>
            <person name="Bertalan M."/>
            <person name="Albano R."/>
            <person name="de Padua V."/>
            <person name="Rouws L."/>
            <person name="Rojas C."/>
            <person name="Hemerly A."/>
            <person name="Teixeira K."/>
            <person name="Schwab S."/>
            <person name="Araujo J."/>
            <person name="Oliveira A."/>
            <person name="Franca L."/>
            <person name="Magalhaes V."/>
            <person name="Alqueres S."/>
            <person name="Cardoso A."/>
            <person name="Almeida W."/>
            <person name="Loureiro M.M."/>
            <person name="Nogueira E."/>
            <person name="Cidade D."/>
            <person name="Oliveira D."/>
            <person name="Simao T."/>
            <person name="Macedo J."/>
            <person name="Valadao A."/>
            <person name="Dreschsel M."/>
            <person name="Freitas F."/>
            <person name="Vidal M."/>
            <person name="Guedes H."/>
            <person name="Rodrigues E."/>
            <person name="Meneses C."/>
            <person name="Brioso P."/>
            <person name="Pozzer L."/>
            <person name="Figueiredo D."/>
            <person name="Montano H."/>
            <person name="Junior J."/>
            <person name="de Souza Filho G."/>
            <person name="Martin Quintana Flores V."/>
            <person name="Ferreira B."/>
            <person name="Branco A."/>
            <person name="Gonzalez P."/>
            <person name="Guillobel H."/>
            <person name="Lemos M."/>
            <person name="Seibel L."/>
            <person name="Macedo J."/>
            <person name="Alves-Ferreira M."/>
            <person name="Sachetto-Martins G."/>
            <person name="Coelho A."/>
            <person name="Santos E."/>
            <person name="Amaral G."/>
            <person name="Neves A."/>
            <person name="Pacheco A.B."/>
            <person name="Carvalho D."/>
            <person name="Lery L."/>
            <person name="Bisch P."/>
            <person name="Rossle S.C."/>
            <person name="Urmenyi T."/>
            <person name="Rael Pereira A."/>
            <person name="Silva R."/>
            <person name="Rondinelli E."/>
            <person name="von Kruger W."/>
            <person name="Martins O."/>
            <person name="Baldani J.I."/>
            <person name="Ferreira P.C."/>
        </authorList>
    </citation>
    <scope>NUCLEOTIDE SEQUENCE [LARGE SCALE GENOMIC DNA]</scope>
    <source>
        <strain>ATCC 49037 / DSM 5601 / CCUG 37298 / CIP 103539 / LMG 7603 / PAl5</strain>
    </source>
</reference>
<reference key="2">
    <citation type="journal article" date="2010" name="Stand. Genomic Sci.">
        <title>Two genome sequences of the same bacterial strain, Gluconacetobacter diazotrophicus PAl 5, suggest a new standard in genome sequence submission.</title>
        <authorList>
            <person name="Giongo A."/>
            <person name="Tyler H.L."/>
            <person name="Zipperer U.N."/>
            <person name="Triplett E.W."/>
        </authorList>
    </citation>
    <scope>NUCLEOTIDE SEQUENCE [LARGE SCALE GENOMIC DNA]</scope>
    <source>
        <strain>ATCC 49037 / DSM 5601 / CCUG 37298 / CIP 103539 / LMG 7603 / PAl5</strain>
    </source>
</reference>
<feature type="chain" id="PRO_1000086716" description="Large ribosomal subunit protein uL15">
    <location>
        <begin position="1"/>
        <end position="162"/>
    </location>
</feature>
<feature type="region of interest" description="Disordered" evidence="2">
    <location>
        <begin position="1"/>
        <end position="39"/>
    </location>
</feature>
<feature type="compositionally biased region" description="Basic and acidic residues" evidence="2">
    <location>
        <begin position="1"/>
        <end position="10"/>
    </location>
</feature>
<feature type="compositionally biased region" description="Gly residues" evidence="2">
    <location>
        <begin position="21"/>
        <end position="35"/>
    </location>
</feature>
<organism>
    <name type="scientific">Gluconacetobacter diazotrophicus (strain ATCC 49037 / DSM 5601 / CCUG 37298 / CIP 103539 / LMG 7603 / PAl5)</name>
    <dbReference type="NCBI Taxonomy" id="272568"/>
    <lineage>
        <taxon>Bacteria</taxon>
        <taxon>Pseudomonadati</taxon>
        <taxon>Pseudomonadota</taxon>
        <taxon>Alphaproteobacteria</taxon>
        <taxon>Acetobacterales</taxon>
        <taxon>Acetobacteraceae</taxon>
        <taxon>Gluconacetobacter</taxon>
    </lineage>
</organism>
<keyword id="KW-1185">Reference proteome</keyword>
<keyword id="KW-0687">Ribonucleoprotein</keyword>
<keyword id="KW-0689">Ribosomal protein</keyword>
<keyword id="KW-0694">RNA-binding</keyword>
<keyword id="KW-0699">rRNA-binding</keyword>
<accession>A9H3K5</accession>
<accession>B5ZII2</accession>